<protein>
    <recommendedName>
        <fullName evidence="1">Nucleoprotein</fullName>
    </recommendedName>
    <alternativeName>
        <fullName evidence="1">Nucleocapsid protein</fullName>
        <shortName evidence="1">Protein N</shortName>
    </alternativeName>
</protein>
<name>NCAP_I37A0</name>
<accession>P26077</accession>
<reference key="1">
    <citation type="journal article" date="1991" name="J. Virol.">
        <title>Evolution of influenza A virus nucleoprotein genes: implications for the origins of H1N1 human and classical swine viruses.</title>
        <authorList>
            <person name="Gorman O.T."/>
            <person name="Bean W.J."/>
            <person name="Kawaoka Y."/>
            <person name="Donatelli I."/>
            <person name="Guo Y."/>
            <person name="Webster R.G."/>
        </authorList>
    </citation>
    <scope>NUCLEOTIDE SEQUENCE [GENOMIC RNA]</scope>
</reference>
<comment type="function">
    <text evidence="1">Encapsidates the negative strand viral RNA, protecting it from nucleases. The encapsidated genomic RNA is termed the ribonucleoprotein (RNP) and serves as template for transcription and replication. The RNP needs to be localized in the host nucleus to start an infectious cycle, but is too large to diffuse through the nuclear pore complex. NP comprises at least 2 nuclear localization signals that are responsible for the active RNP import into the nucleus through cellular importin alpha/beta pathway. Later in the infection, nclear export of RNPs are mediated through viral proteins NEP interacting with M1 which binds nucleoproteins. It is possible that nucleoprotein binds directly host exportin-1/XPO1 and plays an active role in RNPs nuclear export. M1 interaction with RNP seems to hide nucleoprotein's nuclear localization signals. Soon after a virion infects a new cell, M1 dissociates from the RNP under acidification of the virion driven by M2 protein. Dissociation of M1 from RNP unmasks nucleoprotein's nuclear localization signals, targeting the RNP to the nucleus.</text>
</comment>
<comment type="subunit">
    <text evidence="1">Homomultimerizes to form the nucleocapsid. May bind host exportin-1/XPO1. Binds to viral genomic RNA. Protein-RNA contacts are mediated by a combination of electrostatic interactions between positively charged residues and the phosphate backbone and planar interactions between aromatic side chains and bases.</text>
</comment>
<comment type="subcellular location">
    <subcellularLocation>
        <location evidence="1">Virion</location>
    </subcellularLocation>
    <subcellularLocation>
        <location evidence="1">Host nucleus</location>
    </subcellularLocation>
</comment>
<comment type="PTM">
    <text evidence="1">Late in virus-infected cells, may be cleaved from a 56-kDa protein to a 53-kDa protein by a cellular caspase. This cleavage might be a marker for the onset of apoptosis in infected cells or have a specific function in virus host interaction.</text>
</comment>
<comment type="similarity">
    <text evidence="1">Belongs to the influenza viruses nucleoprotein family.</text>
</comment>
<sequence>MASQGTKRSYEQMETGGERQNATEIRASVGRMIGGIGRFYIQMCTELKLSDYEGRLIQNSITIERMVLSAFDERRNKYLEEHPSAGKDPKKTGGPIYRRIDGKWMRELILYDKEEIRRIWRQANNGEYATAGLTHIMIWHSNLNDATYQRTRALVRTGMDPRMCSLMQGSTLPRRSGAAGAAVKGVGTMVMELIRMIKRGINDRNFWRGENGRRTRIAYERMCNILKGKFQTAAQRAMMDQVRESRNPGNAEIEDLIFLARSALILRGSVAHKSCLPACVYGLAVASGHDFEREGYSLVGIDPFRLLQNSQVFSLIRPNENPAHKSQLVWMACHSAAFEDLRVSSFIRGKRVVPRGQLSTRGVQIASNENMETMDSSTLELRSRYWAIRTRSGGNTNQQRASAGQISVQPTFSVQRNLPFERATVMAAFIGNTEGRTSDMRTEIIRMMESARPEDVSFQGRGVFELSDEKATSPIVPSFDMSNEGSYFFGDNAEEYDN</sequence>
<organismHost>
    <name type="scientific">Aves</name>
    <dbReference type="NCBI Taxonomy" id="8782"/>
</organismHost>
<organismHost>
    <name type="scientific">Homo sapiens</name>
    <name type="common">Human</name>
    <dbReference type="NCBI Taxonomy" id="9606"/>
</organismHost>
<organismHost>
    <name type="scientific">Sus scrofa</name>
    <name type="common">Pig</name>
    <dbReference type="NCBI Taxonomy" id="9823"/>
</organismHost>
<proteinExistence type="inferred from homology"/>
<keyword id="KW-0167">Capsid protein</keyword>
<keyword id="KW-1139">Helical capsid protein</keyword>
<keyword id="KW-1048">Host nucleus</keyword>
<keyword id="KW-0945">Host-virus interaction</keyword>
<keyword id="KW-0687">Ribonucleoprotein</keyword>
<keyword id="KW-0694">RNA-binding</keyword>
<keyword id="KW-0543">Viral nucleoprotein</keyword>
<keyword id="KW-1163">Viral penetration into host nucleus</keyword>
<keyword id="KW-0946">Virion</keyword>
<keyword id="KW-1160">Virus entry into host cell</keyword>
<dbReference type="EMBL" id="M63757">
    <property type="protein sequence ID" value="AAA52256.1"/>
    <property type="molecule type" value="Genomic_RNA"/>
</dbReference>
<dbReference type="SMR" id="P26077"/>
<dbReference type="GO" id="GO:0019029">
    <property type="term" value="C:helical viral capsid"/>
    <property type="evidence" value="ECO:0007669"/>
    <property type="project" value="UniProtKB-UniRule"/>
</dbReference>
<dbReference type="GO" id="GO:0043657">
    <property type="term" value="C:host cell"/>
    <property type="evidence" value="ECO:0007669"/>
    <property type="project" value="GOC"/>
</dbReference>
<dbReference type="GO" id="GO:0042025">
    <property type="term" value="C:host cell nucleus"/>
    <property type="evidence" value="ECO:0007669"/>
    <property type="project" value="UniProtKB-SubCell"/>
</dbReference>
<dbReference type="GO" id="GO:1990904">
    <property type="term" value="C:ribonucleoprotein complex"/>
    <property type="evidence" value="ECO:0007669"/>
    <property type="project" value="UniProtKB-KW"/>
</dbReference>
<dbReference type="GO" id="GO:0019013">
    <property type="term" value="C:viral nucleocapsid"/>
    <property type="evidence" value="ECO:0007669"/>
    <property type="project" value="UniProtKB-UniRule"/>
</dbReference>
<dbReference type="GO" id="GO:0003723">
    <property type="term" value="F:RNA binding"/>
    <property type="evidence" value="ECO:0007669"/>
    <property type="project" value="UniProtKB-UniRule"/>
</dbReference>
<dbReference type="GO" id="GO:0005198">
    <property type="term" value="F:structural molecule activity"/>
    <property type="evidence" value="ECO:0007669"/>
    <property type="project" value="UniProtKB-UniRule"/>
</dbReference>
<dbReference type="GO" id="GO:0046718">
    <property type="term" value="P:symbiont entry into host cell"/>
    <property type="evidence" value="ECO:0007669"/>
    <property type="project" value="UniProtKB-KW"/>
</dbReference>
<dbReference type="GO" id="GO:0075732">
    <property type="term" value="P:viral penetration into host nucleus"/>
    <property type="evidence" value="ECO:0007669"/>
    <property type="project" value="UniProtKB-UniRule"/>
</dbReference>
<dbReference type="HAMAP" id="MF_04070">
    <property type="entry name" value="INFV_NCAP"/>
    <property type="match status" value="1"/>
</dbReference>
<dbReference type="InterPro" id="IPR002141">
    <property type="entry name" value="Flu_NP"/>
</dbReference>
<dbReference type="Pfam" id="PF00506">
    <property type="entry name" value="Flu_NP"/>
    <property type="match status" value="1"/>
</dbReference>
<dbReference type="SUPFAM" id="SSF161003">
    <property type="entry name" value="flu NP-like"/>
    <property type="match status" value="1"/>
</dbReference>
<organism>
    <name type="scientific">Influenza A virus (strain A/Swine/29/1937 H1N1)</name>
    <dbReference type="NCBI Taxonomy" id="382842"/>
    <lineage>
        <taxon>Viruses</taxon>
        <taxon>Riboviria</taxon>
        <taxon>Orthornavirae</taxon>
        <taxon>Negarnaviricota</taxon>
        <taxon>Polyploviricotina</taxon>
        <taxon>Insthoviricetes</taxon>
        <taxon>Articulavirales</taxon>
        <taxon>Orthomyxoviridae</taxon>
        <taxon>Alphainfluenzavirus</taxon>
        <taxon>Alphainfluenzavirus influenzae</taxon>
        <taxon>Influenza A virus</taxon>
    </lineage>
</organism>
<feature type="chain" id="PRO_0000079115" description="Nucleoprotein">
    <location>
        <begin position="1"/>
        <end position="498"/>
    </location>
</feature>
<feature type="region of interest" description="Disordered" evidence="2">
    <location>
        <begin position="1"/>
        <end position="21"/>
    </location>
</feature>
<feature type="short sequence motif" description="Unconventional nuclear localization signal" evidence="1">
    <location>
        <begin position="1"/>
        <end position="18"/>
    </location>
</feature>
<feature type="short sequence motif" description="Bipartite nuclear localization signal" evidence="1">
    <location>
        <begin position="198"/>
        <end position="216"/>
    </location>
</feature>
<evidence type="ECO:0000255" key="1">
    <source>
        <dbReference type="HAMAP-Rule" id="MF_04070"/>
    </source>
</evidence>
<evidence type="ECO:0000256" key="2">
    <source>
        <dbReference type="SAM" id="MobiDB-lite"/>
    </source>
</evidence>
<gene>
    <name evidence="1" type="primary">NP</name>
</gene>